<sequence>MNIRPLHDKLIVERLEVENKSEGGIVLTSQSVKKSNRGKVVAVGLGRPLKNGDRARMEVKTGDQIIFNDGYGVKTEKVDGKEYLILSESDVLAIVE</sequence>
<feature type="chain" id="PRO_0000174892" description="Co-chaperonin GroES 2">
    <location>
        <begin position="1"/>
        <end position="96"/>
    </location>
</feature>
<comment type="function">
    <text evidence="1">Together with the chaperonin GroEL, plays an essential role in assisting protein folding. The GroEL-GroES system forms a nano-cage that allows encapsulation of the non-native substrate proteins and provides a physical environment optimized to promote and accelerate protein folding. GroES binds to the apical surface of the GroEL ring, thereby capping the opening of the GroEL channel.</text>
</comment>
<comment type="subunit">
    <text evidence="1">Heptamer of 7 subunits arranged in a ring. Interacts with the chaperonin GroEL.</text>
</comment>
<comment type="subcellular location">
    <subcellularLocation>
        <location evidence="1">Cytoplasm</location>
    </subcellularLocation>
</comment>
<comment type="similarity">
    <text evidence="1 2">Belongs to the GroES chaperonin family.</text>
</comment>
<accession>Q9KLC7</accession>
<evidence type="ECO:0000255" key="1">
    <source>
        <dbReference type="HAMAP-Rule" id="MF_00580"/>
    </source>
</evidence>
<evidence type="ECO:0000305" key="2"/>
<name>CH102_VIBCH</name>
<organism>
    <name type="scientific">Vibrio cholerae serotype O1 (strain ATCC 39315 / El Tor Inaba N16961)</name>
    <dbReference type="NCBI Taxonomy" id="243277"/>
    <lineage>
        <taxon>Bacteria</taxon>
        <taxon>Pseudomonadati</taxon>
        <taxon>Pseudomonadota</taxon>
        <taxon>Gammaproteobacteria</taxon>
        <taxon>Vibrionales</taxon>
        <taxon>Vibrionaceae</taxon>
        <taxon>Vibrio</taxon>
    </lineage>
</organism>
<keyword id="KW-0143">Chaperone</keyword>
<keyword id="KW-0963">Cytoplasm</keyword>
<keyword id="KW-1185">Reference proteome</keyword>
<dbReference type="EMBL" id="AE003853">
    <property type="protein sequence ID" value="AAF96717.1"/>
    <property type="molecule type" value="Genomic_DNA"/>
</dbReference>
<dbReference type="PIR" id="C82412">
    <property type="entry name" value="C82412"/>
</dbReference>
<dbReference type="RefSeq" id="NP_233205.1">
    <property type="nucleotide sequence ID" value="NC_002506.1"/>
</dbReference>
<dbReference type="RefSeq" id="WP_001026270.1">
    <property type="nucleotide sequence ID" value="NZ_LT906615.1"/>
</dbReference>
<dbReference type="SMR" id="Q9KLC7"/>
<dbReference type="STRING" id="243277.VC_A0819"/>
<dbReference type="DNASU" id="2612375"/>
<dbReference type="EnsemblBacteria" id="AAF96717">
    <property type="protein sequence ID" value="AAF96717"/>
    <property type="gene ID" value="VC_A0819"/>
</dbReference>
<dbReference type="KEGG" id="vch:VC_A0819"/>
<dbReference type="PATRIC" id="fig|243277.26.peg.3439"/>
<dbReference type="eggNOG" id="COG0234">
    <property type="taxonomic scope" value="Bacteria"/>
</dbReference>
<dbReference type="HOGENOM" id="CLU_132825_1_1_6"/>
<dbReference type="Proteomes" id="UP000000584">
    <property type="component" value="Chromosome 2"/>
</dbReference>
<dbReference type="GO" id="GO:0005737">
    <property type="term" value="C:cytoplasm"/>
    <property type="evidence" value="ECO:0007669"/>
    <property type="project" value="UniProtKB-SubCell"/>
</dbReference>
<dbReference type="GO" id="GO:0005524">
    <property type="term" value="F:ATP binding"/>
    <property type="evidence" value="ECO:0007669"/>
    <property type="project" value="InterPro"/>
</dbReference>
<dbReference type="GO" id="GO:0046872">
    <property type="term" value="F:metal ion binding"/>
    <property type="evidence" value="ECO:0000318"/>
    <property type="project" value="GO_Central"/>
</dbReference>
<dbReference type="GO" id="GO:0044183">
    <property type="term" value="F:protein folding chaperone"/>
    <property type="evidence" value="ECO:0007669"/>
    <property type="project" value="InterPro"/>
</dbReference>
<dbReference type="GO" id="GO:0051087">
    <property type="term" value="F:protein-folding chaperone binding"/>
    <property type="evidence" value="ECO:0000318"/>
    <property type="project" value="GO_Central"/>
</dbReference>
<dbReference type="GO" id="GO:0051082">
    <property type="term" value="F:unfolded protein binding"/>
    <property type="evidence" value="ECO:0000318"/>
    <property type="project" value="GO_Central"/>
</dbReference>
<dbReference type="GO" id="GO:0051085">
    <property type="term" value="P:chaperone cofactor-dependent protein refolding"/>
    <property type="evidence" value="ECO:0000318"/>
    <property type="project" value="GO_Central"/>
</dbReference>
<dbReference type="CDD" id="cd00320">
    <property type="entry name" value="cpn10"/>
    <property type="match status" value="1"/>
</dbReference>
<dbReference type="FunFam" id="2.30.33.40:FF:000001">
    <property type="entry name" value="10 kDa chaperonin"/>
    <property type="match status" value="1"/>
</dbReference>
<dbReference type="Gene3D" id="2.30.33.40">
    <property type="entry name" value="GroES chaperonin"/>
    <property type="match status" value="1"/>
</dbReference>
<dbReference type="HAMAP" id="MF_00580">
    <property type="entry name" value="CH10"/>
    <property type="match status" value="1"/>
</dbReference>
<dbReference type="InterPro" id="IPR020818">
    <property type="entry name" value="Chaperonin_GroES"/>
</dbReference>
<dbReference type="InterPro" id="IPR037124">
    <property type="entry name" value="Chaperonin_GroES_sf"/>
</dbReference>
<dbReference type="InterPro" id="IPR018369">
    <property type="entry name" value="Chaprnonin_Cpn10_CS"/>
</dbReference>
<dbReference type="InterPro" id="IPR011032">
    <property type="entry name" value="GroES-like_sf"/>
</dbReference>
<dbReference type="NCBIfam" id="NF001526">
    <property type="entry name" value="PRK00364.1-1"/>
    <property type="match status" value="1"/>
</dbReference>
<dbReference type="PANTHER" id="PTHR10772">
    <property type="entry name" value="10 KDA HEAT SHOCK PROTEIN"/>
    <property type="match status" value="1"/>
</dbReference>
<dbReference type="PANTHER" id="PTHR10772:SF58">
    <property type="entry name" value="CO-CHAPERONIN GROES"/>
    <property type="match status" value="1"/>
</dbReference>
<dbReference type="Pfam" id="PF00166">
    <property type="entry name" value="Cpn10"/>
    <property type="match status" value="1"/>
</dbReference>
<dbReference type="PRINTS" id="PR00297">
    <property type="entry name" value="CHAPERONIN10"/>
</dbReference>
<dbReference type="SMART" id="SM00883">
    <property type="entry name" value="Cpn10"/>
    <property type="match status" value="1"/>
</dbReference>
<dbReference type="SUPFAM" id="SSF50129">
    <property type="entry name" value="GroES-like"/>
    <property type="match status" value="1"/>
</dbReference>
<dbReference type="PROSITE" id="PS00681">
    <property type="entry name" value="CHAPERONINS_CPN10"/>
    <property type="match status" value="1"/>
</dbReference>
<reference key="1">
    <citation type="journal article" date="2000" name="Nature">
        <title>DNA sequence of both chromosomes of the cholera pathogen Vibrio cholerae.</title>
        <authorList>
            <person name="Heidelberg J.F."/>
            <person name="Eisen J.A."/>
            <person name="Nelson W.C."/>
            <person name="Clayton R.A."/>
            <person name="Gwinn M.L."/>
            <person name="Dodson R.J."/>
            <person name="Haft D.H."/>
            <person name="Hickey E.K."/>
            <person name="Peterson J.D."/>
            <person name="Umayam L.A."/>
            <person name="Gill S.R."/>
            <person name="Nelson K.E."/>
            <person name="Read T.D."/>
            <person name="Tettelin H."/>
            <person name="Richardson D.L."/>
            <person name="Ermolaeva M.D."/>
            <person name="Vamathevan J.J."/>
            <person name="Bass S."/>
            <person name="Qin H."/>
            <person name="Dragoi I."/>
            <person name="Sellers P."/>
            <person name="McDonald L.A."/>
            <person name="Utterback T.R."/>
            <person name="Fleischmann R.D."/>
            <person name="Nierman W.C."/>
            <person name="White O."/>
            <person name="Salzberg S.L."/>
            <person name="Smith H.O."/>
            <person name="Colwell R.R."/>
            <person name="Mekalanos J.J."/>
            <person name="Venter J.C."/>
            <person name="Fraser C.M."/>
        </authorList>
    </citation>
    <scope>NUCLEOTIDE SEQUENCE [LARGE SCALE GENOMIC DNA]</scope>
    <source>
        <strain>ATCC 39315 / El Tor Inaba N16961</strain>
    </source>
</reference>
<proteinExistence type="inferred from homology"/>
<gene>
    <name evidence="1" type="primary">groES2</name>
    <name evidence="1" type="synonym">groS2</name>
    <name type="ordered locus">VC_A0819</name>
</gene>
<protein>
    <recommendedName>
        <fullName evidence="1">Co-chaperonin GroES 2</fullName>
    </recommendedName>
    <alternativeName>
        <fullName evidence="1">10 kDa chaperonin 2</fullName>
    </alternativeName>
    <alternativeName>
        <fullName evidence="1">Chaperonin-10 2</fullName>
        <shortName evidence="1">Cpn10 2</shortName>
    </alternativeName>
</protein>